<proteinExistence type="inferred from homology"/>
<name>YOQW_BPSPB</name>
<feature type="initiator methionine" description="Removed" evidence="2">
    <location>
        <position position="1"/>
    </location>
</feature>
<feature type="chain" id="PRO_0000164404" description="Abasic site processing protein YoqW">
    <location>
        <begin position="2"/>
        <end position="224"/>
    </location>
</feature>
<feature type="active site" description="Nucleophile" evidence="3">
    <location>
        <position position="2"/>
    </location>
</feature>
<feature type="active site" evidence="3">
    <location>
        <position position="106"/>
    </location>
</feature>
<feature type="site" description="Required for sensing abasic sites" evidence="1">
    <location>
        <position position="106"/>
    </location>
</feature>
<feature type="site" description="Required to stabilize abasic sites" evidence="1">
    <location>
        <position position="163"/>
    </location>
</feature>
<feature type="modified residue" description="Thiazolidine linkage to a ring-opened DNA abasic site" evidence="1">
    <location>
        <position position="2"/>
    </location>
</feature>
<dbReference type="EC" id="4.-.-.-" evidence="1"/>
<dbReference type="EC" id="3.4.-.-" evidence="2"/>
<dbReference type="EMBL" id="AF020713">
    <property type="protein sequence ID" value="AAC13091.1"/>
    <property type="molecule type" value="Genomic_DNA"/>
</dbReference>
<dbReference type="PIR" id="T12882">
    <property type="entry name" value="T12882"/>
</dbReference>
<dbReference type="RefSeq" id="NP_046670.1">
    <property type="nucleotide sequence ID" value="NC_001884.1"/>
</dbReference>
<dbReference type="SMR" id="O64131"/>
<dbReference type="GeneID" id="1261483"/>
<dbReference type="KEGG" id="vg:1261483"/>
<dbReference type="Proteomes" id="UP000009091">
    <property type="component" value="Genome"/>
</dbReference>
<dbReference type="GO" id="GO:0016829">
    <property type="term" value="F:lyase activity"/>
    <property type="evidence" value="ECO:0007669"/>
    <property type="project" value="UniProtKB-KW"/>
</dbReference>
<dbReference type="GO" id="GO:0008233">
    <property type="term" value="F:peptidase activity"/>
    <property type="evidence" value="ECO:0007669"/>
    <property type="project" value="UniProtKB-KW"/>
</dbReference>
<dbReference type="GO" id="GO:0003697">
    <property type="term" value="F:single-stranded DNA binding"/>
    <property type="evidence" value="ECO:0007669"/>
    <property type="project" value="InterPro"/>
</dbReference>
<dbReference type="GO" id="GO:0106300">
    <property type="term" value="P:protein-DNA covalent cross-linking repair"/>
    <property type="evidence" value="ECO:0007669"/>
    <property type="project" value="InterPro"/>
</dbReference>
<dbReference type="GO" id="GO:0006508">
    <property type="term" value="P:proteolysis"/>
    <property type="evidence" value="ECO:0007669"/>
    <property type="project" value="UniProtKB-KW"/>
</dbReference>
<dbReference type="GO" id="GO:0009432">
    <property type="term" value="P:SOS response"/>
    <property type="evidence" value="ECO:0007669"/>
    <property type="project" value="UniProtKB-KW"/>
</dbReference>
<dbReference type="Gene3D" id="3.90.1680.10">
    <property type="entry name" value="SOS response associated peptidase-like"/>
    <property type="match status" value="1"/>
</dbReference>
<dbReference type="InterPro" id="IPR003738">
    <property type="entry name" value="SRAP"/>
</dbReference>
<dbReference type="InterPro" id="IPR036590">
    <property type="entry name" value="SRAP-like"/>
</dbReference>
<dbReference type="PANTHER" id="PTHR13604:SF0">
    <property type="entry name" value="ABASIC SITE PROCESSING PROTEIN HMCES"/>
    <property type="match status" value="1"/>
</dbReference>
<dbReference type="PANTHER" id="PTHR13604">
    <property type="entry name" value="DC12-RELATED"/>
    <property type="match status" value="1"/>
</dbReference>
<dbReference type="Pfam" id="PF02586">
    <property type="entry name" value="SRAP"/>
    <property type="match status" value="1"/>
</dbReference>
<dbReference type="SUPFAM" id="SSF143081">
    <property type="entry name" value="BB1717-like"/>
    <property type="match status" value="1"/>
</dbReference>
<protein>
    <recommendedName>
        <fullName evidence="4">Abasic site processing protein YoqW</fullName>
        <ecNumber evidence="1">4.-.-.-</ecNumber>
    </recommendedName>
    <alternativeName>
        <fullName>Peptidase YoqW</fullName>
        <ecNumber evidence="2">3.4.-.-</ecNumber>
    </alternativeName>
</protein>
<evidence type="ECO:0000250" key="1">
    <source>
        <dbReference type="UniProtKB" id="P76318"/>
    </source>
</evidence>
<evidence type="ECO:0000250" key="2">
    <source>
        <dbReference type="UniProtKB" id="Q8R1M0"/>
    </source>
</evidence>
<evidence type="ECO:0000250" key="3">
    <source>
        <dbReference type="UniProtKB" id="Q96FZ2"/>
    </source>
</evidence>
<evidence type="ECO:0000305" key="4"/>
<sequence>MCGRFTLFSEFDDIIEQFNIDQFLPEGEYHPSYNVAPSQNILTIINDGSNNRLGKLRWGLIPPWAKDEKIGYKMINARAETLSEKPSFRKPLVSKRCIIPADSFYEWKRLDPKTKIPMRIKLKSSNLFAFAGLYEKWNTPEGNPLYTCTIITTKPNELMEDIHDRMPVILTDENEKEWLNPKNTDPDYLQSLLQPYDADDMEAYQVSSLVNSPKNNSPELIESH</sequence>
<accession>O64131</accession>
<reference key="1">
    <citation type="journal article" date="1999" name="Microbiology">
        <title>Nucleotide sequence of the Bacillus subtilis temperate bacteriophage SPbetac2.</title>
        <authorList>
            <person name="Lazarevic V."/>
            <person name="Duesterhoeft A."/>
            <person name="Soldo B."/>
            <person name="Hilbert H."/>
            <person name="Mauel C."/>
            <person name="Karamata D."/>
        </authorList>
    </citation>
    <scope>NUCLEOTIDE SEQUENCE [LARGE SCALE GENOMIC DNA]</scope>
</reference>
<comment type="function">
    <text evidence="1 2">Sensor of abasic sites in single-stranded DNA (ssDNA) required to preserve genome integrity by promoting error-free repair of abasic sites. Recognizes and binds abasic sites in ssDNA at replication forks and chemically modifies the lesion by forming a covalent cross-link with DNA: forms a stable thiazolidine linkage between a ring-opened abasic site and the alpha-amino and sulfhydryl substituents of its N-terminal catalytic cysteine residue. The DNA-protein cross-link is then reversed: able to catalyze the reversal of the thiazolidine cross-link and cycle between a cross-link and a non-cross-linked state depending on DNA context: mediates self-reversal of the thiazolidine cross-link in double stranded DNA (By similarity). May act as a protease: mediates autocatalytic processing of its N-terminal methionine in order to expose the catalytic cysteine (By similarity).</text>
</comment>
<comment type="activity regulation">
    <text evidence="3">Formation and reversal of DNA-protein cross-link depends on DNA context. Catalyzes formation of the thiazolidine linkage in presence of abasic sites in single-stranded DNA. Mediates the reversal of the thiazolidine cross-link in presence of double stranded DNA.</text>
</comment>
<comment type="domain">
    <text evidence="1 3">The N-terminal catalytic Cys-2 residue forms a thiazolidine linkage to a ring-opened DNA abasic site (By similarity). Glu-106 catalyzes reversal of the thiazolidine linkage; self-reversal is favoured by duplex DNA formation (By similarity). Glu-106 is also involved in sensing abasic sites in single-stranded DNA (ssDNA). His-163 stabilizes the abasic sites by forming a hydrogen bond with the O4' hydroxyl group (By similarity).</text>
</comment>
<comment type="similarity">
    <text evidence="4">Belongs to the SOS response-associated peptidase family.</text>
</comment>
<gene>
    <name type="primary">yoqW</name>
    <name type="ordered locus">SPBc2p119</name>
</gene>
<keyword id="KW-0190">Covalent protein-DNA linkage</keyword>
<keyword id="KW-0227">DNA damage</keyword>
<keyword id="KW-0238">DNA-binding</keyword>
<keyword id="KW-0378">Hydrolase</keyword>
<keyword id="KW-0456">Lyase</keyword>
<keyword id="KW-0645">Protease</keyword>
<keyword id="KW-1185">Reference proteome</keyword>
<keyword id="KW-0742">SOS response</keyword>
<organismHost>
    <name type="scientific">Bacillus pumilus</name>
    <name type="common">Bacillus mesentericus</name>
    <dbReference type="NCBI Taxonomy" id="1408"/>
</organismHost>
<organismHost>
    <name type="scientific">Bacillus subtilis</name>
    <dbReference type="NCBI Taxonomy" id="1423"/>
</organismHost>
<organism>
    <name type="scientific">Bacillus phage SPbeta</name>
    <name type="common">Bacillus phage SPBc2</name>
    <name type="synonym">Bacteriophage SP-beta</name>
    <dbReference type="NCBI Taxonomy" id="2932878"/>
    <lineage>
        <taxon>Viruses</taxon>
        <taxon>Duplodnaviria</taxon>
        <taxon>Heunggongvirae</taxon>
        <taxon>Uroviricota</taxon>
        <taxon>Caudoviricetes</taxon>
        <taxon>Spbetavirus</taxon>
        <taxon>Spbetavirus SPbeta</taxon>
    </lineage>
</organism>